<name>UVRB_BACFN</name>
<sequence>MNFELTSAYKPTGDQPEAIAQLTEGVLEGVPAQTLLGVTGSGKTFTIANVIANINKPTLILSHNKTLAAQLYSEFKGFFPNNAVEYYVSYYDYYQPEAYLPSSDTYIEKDLAINDEIDKLRLAATSALLSGRKDVVVVSSVSCIYGMGNPSDFYNNVIEIERGRTINRNVFLRRLVDSLYMRNDIELNRGNFRVKGDTVDIYLAYSDNLLRVTFWGDEIDGIEEVDPVSGVTIAPFEAYKIYPANLFMTTKEATLRAIHEIEDDLTKQVAYFESIGKEYEAKRLYERVTYDMEMIRELGHCSGIENYSRYFDGRAAGTRPYCLLDFFPDDFLIVIDESHVSVPQIRAMYGGDRARKINLVEYGFRLPAAMDNRPLKFEEFESMAKQVIYVSATPADYELVQSEGIVVEQVIRPTGLLDPVIEVRPSLNQIDDLMEEIQIRIEKEERVLVTTLTKRMAEELTEYLLNNNVRCNYIHSDVDTLERVKIMDDLRQGVYDVLIGVNLLREGLDLPEVSLVAILDADKEGFLRSHRSLTQTAGRAARNVNGMVIMYADKITDSMRLTIDETNRRREKQLAYNEEHGITPQQIKKARNLSVFGNGAETEDTQKGTRAYVEPSSPNIAADPVVQYMSKAQLEKSMERTRKLMQEAAKKLEFIEAAQYRDELLKMEDLMKEKWPG</sequence>
<dbReference type="EMBL" id="CR626927">
    <property type="protein sequence ID" value="CAH08342.1"/>
    <property type="molecule type" value="Genomic_DNA"/>
</dbReference>
<dbReference type="RefSeq" id="WP_005788206.1">
    <property type="nucleotide sequence ID" value="NC_003228.3"/>
</dbReference>
<dbReference type="SMR" id="Q5LC24"/>
<dbReference type="PaxDb" id="272559-BF9343_2561"/>
<dbReference type="GeneID" id="60368152"/>
<dbReference type="KEGG" id="bfs:BF9343_2561"/>
<dbReference type="eggNOG" id="COG0556">
    <property type="taxonomic scope" value="Bacteria"/>
</dbReference>
<dbReference type="HOGENOM" id="CLU_009621_2_1_10"/>
<dbReference type="Proteomes" id="UP000006731">
    <property type="component" value="Chromosome"/>
</dbReference>
<dbReference type="GO" id="GO:0005737">
    <property type="term" value="C:cytoplasm"/>
    <property type="evidence" value="ECO:0007669"/>
    <property type="project" value="UniProtKB-SubCell"/>
</dbReference>
<dbReference type="GO" id="GO:0009380">
    <property type="term" value="C:excinuclease repair complex"/>
    <property type="evidence" value="ECO:0007669"/>
    <property type="project" value="InterPro"/>
</dbReference>
<dbReference type="GO" id="GO:0005524">
    <property type="term" value="F:ATP binding"/>
    <property type="evidence" value="ECO:0007669"/>
    <property type="project" value="UniProtKB-UniRule"/>
</dbReference>
<dbReference type="GO" id="GO:0016887">
    <property type="term" value="F:ATP hydrolysis activity"/>
    <property type="evidence" value="ECO:0007669"/>
    <property type="project" value="InterPro"/>
</dbReference>
<dbReference type="GO" id="GO:0003677">
    <property type="term" value="F:DNA binding"/>
    <property type="evidence" value="ECO:0007669"/>
    <property type="project" value="UniProtKB-UniRule"/>
</dbReference>
<dbReference type="GO" id="GO:0009381">
    <property type="term" value="F:excinuclease ABC activity"/>
    <property type="evidence" value="ECO:0007669"/>
    <property type="project" value="UniProtKB-UniRule"/>
</dbReference>
<dbReference type="GO" id="GO:0006289">
    <property type="term" value="P:nucleotide-excision repair"/>
    <property type="evidence" value="ECO:0007669"/>
    <property type="project" value="UniProtKB-UniRule"/>
</dbReference>
<dbReference type="GO" id="GO:0009432">
    <property type="term" value="P:SOS response"/>
    <property type="evidence" value="ECO:0007669"/>
    <property type="project" value="UniProtKB-UniRule"/>
</dbReference>
<dbReference type="CDD" id="cd17916">
    <property type="entry name" value="DEXHc_UvrB"/>
    <property type="match status" value="1"/>
</dbReference>
<dbReference type="CDD" id="cd18790">
    <property type="entry name" value="SF2_C_UvrB"/>
    <property type="match status" value="1"/>
</dbReference>
<dbReference type="Gene3D" id="3.40.50.300">
    <property type="entry name" value="P-loop containing nucleotide triphosphate hydrolases"/>
    <property type="match status" value="3"/>
</dbReference>
<dbReference type="Gene3D" id="4.10.860.10">
    <property type="entry name" value="UVR domain"/>
    <property type="match status" value="1"/>
</dbReference>
<dbReference type="HAMAP" id="MF_00204">
    <property type="entry name" value="UvrB"/>
    <property type="match status" value="1"/>
</dbReference>
<dbReference type="InterPro" id="IPR006935">
    <property type="entry name" value="Helicase/UvrB_N"/>
</dbReference>
<dbReference type="InterPro" id="IPR014001">
    <property type="entry name" value="Helicase_ATP-bd"/>
</dbReference>
<dbReference type="InterPro" id="IPR001650">
    <property type="entry name" value="Helicase_C-like"/>
</dbReference>
<dbReference type="InterPro" id="IPR027417">
    <property type="entry name" value="P-loop_NTPase"/>
</dbReference>
<dbReference type="InterPro" id="IPR001943">
    <property type="entry name" value="UVR_dom"/>
</dbReference>
<dbReference type="InterPro" id="IPR036876">
    <property type="entry name" value="UVR_dom_sf"/>
</dbReference>
<dbReference type="InterPro" id="IPR004807">
    <property type="entry name" value="UvrB"/>
</dbReference>
<dbReference type="InterPro" id="IPR041471">
    <property type="entry name" value="UvrB_inter"/>
</dbReference>
<dbReference type="InterPro" id="IPR024759">
    <property type="entry name" value="UvrB_YAD/RRR_dom"/>
</dbReference>
<dbReference type="NCBIfam" id="NF003673">
    <property type="entry name" value="PRK05298.1"/>
    <property type="match status" value="1"/>
</dbReference>
<dbReference type="NCBIfam" id="TIGR00631">
    <property type="entry name" value="uvrb"/>
    <property type="match status" value="1"/>
</dbReference>
<dbReference type="PANTHER" id="PTHR24029">
    <property type="entry name" value="UVRABC SYSTEM PROTEIN B"/>
    <property type="match status" value="1"/>
</dbReference>
<dbReference type="PANTHER" id="PTHR24029:SF0">
    <property type="entry name" value="UVRABC SYSTEM PROTEIN B"/>
    <property type="match status" value="1"/>
</dbReference>
<dbReference type="Pfam" id="PF00271">
    <property type="entry name" value="Helicase_C"/>
    <property type="match status" value="1"/>
</dbReference>
<dbReference type="Pfam" id="PF04851">
    <property type="entry name" value="ResIII"/>
    <property type="match status" value="1"/>
</dbReference>
<dbReference type="Pfam" id="PF12344">
    <property type="entry name" value="UvrB"/>
    <property type="match status" value="1"/>
</dbReference>
<dbReference type="Pfam" id="PF17757">
    <property type="entry name" value="UvrB_inter"/>
    <property type="match status" value="1"/>
</dbReference>
<dbReference type="SMART" id="SM00487">
    <property type="entry name" value="DEXDc"/>
    <property type="match status" value="1"/>
</dbReference>
<dbReference type="SMART" id="SM00490">
    <property type="entry name" value="HELICc"/>
    <property type="match status" value="1"/>
</dbReference>
<dbReference type="SUPFAM" id="SSF46600">
    <property type="entry name" value="C-terminal UvrC-binding domain of UvrB"/>
    <property type="match status" value="1"/>
</dbReference>
<dbReference type="SUPFAM" id="SSF52540">
    <property type="entry name" value="P-loop containing nucleoside triphosphate hydrolases"/>
    <property type="match status" value="2"/>
</dbReference>
<dbReference type="PROSITE" id="PS51192">
    <property type="entry name" value="HELICASE_ATP_BIND_1"/>
    <property type="match status" value="1"/>
</dbReference>
<dbReference type="PROSITE" id="PS51194">
    <property type="entry name" value="HELICASE_CTER"/>
    <property type="match status" value="1"/>
</dbReference>
<dbReference type="PROSITE" id="PS50151">
    <property type="entry name" value="UVR"/>
    <property type="match status" value="1"/>
</dbReference>
<organism>
    <name type="scientific">Bacteroides fragilis (strain ATCC 25285 / DSM 2151 / CCUG 4856 / JCM 11019 / LMG 10263 / NCTC 9343 / Onslow / VPI 2553 / EN-2)</name>
    <dbReference type="NCBI Taxonomy" id="272559"/>
    <lineage>
        <taxon>Bacteria</taxon>
        <taxon>Pseudomonadati</taxon>
        <taxon>Bacteroidota</taxon>
        <taxon>Bacteroidia</taxon>
        <taxon>Bacteroidales</taxon>
        <taxon>Bacteroidaceae</taxon>
        <taxon>Bacteroides</taxon>
    </lineage>
</organism>
<evidence type="ECO:0000255" key="1">
    <source>
        <dbReference type="HAMAP-Rule" id="MF_00204"/>
    </source>
</evidence>
<reference key="1">
    <citation type="journal article" date="2005" name="Science">
        <title>Extensive DNA inversions in the B. fragilis genome control variable gene expression.</title>
        <authorList>
            <person name="Cerdeno-Tarraga A.-M."/>
            <person name="Patrick S."/>
            <person name="Crossman L.C."/>
            <person name="Blakely G."/>
            <person name="Abratt V."/>
            <person name="Lennard N."/>
            <person name="Poxton I."/>
            <person name="Duerden B."/>
            <person name="Harris B."/>
            <person name="Quail M.A."/>
            <person name="Barron A."/>
            <person name="Clark L."/>
            <person name="Corton C."/>
            <person name="Doggett J."/>
            <person name="Holden M.T.G."/>
            <person name="Larke N."/>
            <person name="Line A."/>
            <person name="Lord A."/>
            <person name="Norbertczak H."/>
            <person name="Ormond D."/>
            <person name="Price C."/>
            <person name="Rabbinowitsch E."/>
            <person name="Woodward J."/>
            <person name="Barrell B.G."/>
            <person name="Parkhill J."/>
        </authorList>
    </citation>
    <scope>NUCLEOTIDE SEQUENCE [LARGE SCALE GENOMIC DNA]</scope>
    <source>
        <strain>ATCC 25285 / DSM 2151 / CCUG 4856 / JCM 11019 / LMG 10263 / NCTC 9343 / Onslow / VPI 2553 / EN-2</strain>
    </source>
</reference>
<accession>Q5LC24</accession>
<keyword id="KW-0067">ATP-binding</keyword>
<keyword id="KW-0963">Cytoplasm</keyword>
<keyword id="KW-0227">DNA damage</keyword>
<keyword id="KW-0228">DNA excision</keyword>
<keyword id="KW-0234">DNA repair</keyword>
<keyword id="KW-0267">Excision nuclease</keyword>
<keyword id="KW-0547">Nucleotide-binding</keyword>
<keyword id="KW-0742">SOS response</keyword>
<feature type="chain" id="PRO_0000227287" description="UvrABC system protein B">
    <location>
        <begin position="1"/>
        <end position="677"/>
    </location>
</feature>
<feature type="domain" description="Helicase ATP-binding" evidence="1">
    <location>
        <begin position="24"/>
        <end position="412"/>
    </location>
</feature>
<feature type="domain" description="Helicase C-terminal" evidence="1">
    <location>
        <begin position="429"/>
        <end position="591"/>
    </location>
</feature>
<feature type="domain" description="UVR" evidence="1">
    <location>
        <begin position="635"/>
        <end position="670"/>
    </location>
</feature>
<feature type="short sequence motif" description="Beta-hairpin">
    <location>
        <begin position="90"/>
        <end position="113"/>
    </location>
</feature>
<feature type="binding site" evidence="1">
    <location>
        <begin position="37"/>
        <end position="44"/>
    </location>
    <ligand>
        <name>ATP</name>
        <dbReference type="ChEBI" id="CHEBI:30616"/>
    </ligand>
</feature>
<proteinExistence type="inferred from homology"/>
<comment type="function">
    <text evidence="1">The UvrABC repair system catalyzes the recognition and processing of DNA lesions. A damage recognition complex composed of 2 UvrA and 2 UvrB subunits scans DNA for abnormalities. Upon binding of the UvrA(2)B(2) complex to a putative damaged site, the DNA wraps around one UvrB monomer. DNA wrap is dependent on ATP binding by UvrB and probably causes local melting of the DNA helix, facilitating insertion of UvrB beta-hairpin between the DNA strands. Then UvrB probes one DNA strand for the presence of a lesion. If a lesion is found the UvrA subunits dissociate and the UvrB-DNA preincision complex is formed. This complex is subsequently bound by UvrC and the second UvrB is released. If no lesion is found, the DNA wraps around the other UvrB subunit that will check the other stand for damage.</text>
</comment>
<comment type="subunit">
    <text evidence="1">Forms a heterotetramer with UvrA during the search for lesions. Interacts with UvrC in an incision complex.</text>
</comment>
<comment type="subcellular location">
    <subcellularLocation>
        <location evidence="1">Cytoplasm</location>
    </subcellularLocation>
</comment>
<comment type="domain">
    <text evidence="1">The beta-hairpin motif is involved in DNA binding.</text>
</comment>
<comment type="similarity">
    <text evidence="1">Belongs to the UvrB family.</text>
</comment>
<protein>
    <recommendedName>
        <fullName evidence="1">UvrABC system protein B</fullName>
        <shortName evidence="1">Protein UvrB</shortName>
    </recommendedName>
    <alternativeName>
        <fullName evidence="1">Excinuclease ABC subunit B</fullName>
    </alternativeName>
</protein>
<gene>
    <name evidence="1" type="primary">uvrB</name>
    <name type="ordered locus">BF2642</name>
</gene>